<reference key="1">
    <citation type="journal article" date="2009" name="PLoS Pathog.">
        <title>Genomic evidence for the evolution of Streptococcus equi: host restriction, increased virulence, and genetic exchange with human pathogens.</title>
        <authorList>
            <person name="Holden M.T.G."/>
            <person name="Heather Z."/>
            <person name="Paillot R."/>
            <person name="Steward K.F."/>
            <person name="Webb K."/>
            <person name="Ainslie F."/>
            <person name="Jourdan T."/>
            <person name="Bason N.C."/>
            <person name="Holroyd N.E."/>
            <person name="Mungall K."/>
            <person name="Quail M.A."/>
            <person name="Sanders M."/>
            <person name="Simmonds M."/>
            <person name="Willey D."/>
            <person name="Brooks K."/>
            <person name="Aanensen D.M."/>
            <person name="Spratt B.G."/>
            <person name="Jolley K.A."/>
            <person name="Maiden M.C.J."/>
            <person name="Kehoe M."/>
            <person name="Chanter N."/>
            <person name="Bentley S.D."/>
            <person name="Robinson C."/>
            <person name="Maskell D.J."/>
            <person name="Parkhill J."/>
            <person name="Waller A.S."/>
        </authorList>
    </citation>
    <scope>NUCLEOTIDE SEQUENCE [LARGE SCALE GENOMIC DNA]</scope>
    <source>
        <strain>H70</strain>
    </source>
</reference>
<evidence type="ECO:0000250" key="1"/>
<evidence type="ECO:0000255" key="2">
    <source>
        <dbReference type="HAMAP-Rule" id="MF_00047"/>
    </source>
</evidence>
<name>DDL_STRS7</name>
<gene>
    <name evidence="2" type="primary">ddl</name>
    <name type="ordered locus">SZO_13560</name>
</gene>
<feature type="chain" id="PRO_1000202206" description="D-alanine--D-alanine ligase">
    <location>
        <begin position="1"/>
        <end position="348"/>
    </location>
</feature>
<feature type="domain" description="ATP-grasp" evidence="2">
    <location>
        <begin position="132"/>
        <end position="334"/>
    </location>
</feature>
<feature type="binding site" evidence="2">
    <location>
        <begin position="162"/>
        <end position="217"/>
    </location>
    <ligand>
        <name>ATP</name>
        <dbReference type="ChEBI" id="CHEBI:30616"/>
    </ligand>
</feature>
<feature type="binding site" evidence="2">
    <location>
        <position position="288"/>
    </location>
    <ligand>
        <name>Mg(2+)</name>
        <dbReference type="ChEBI" id="CHEBI:18420"/>
        <label>1</label>
    </ligand>
</feature>
<feature type="binding site" evidence="2">
    <location>
        <position position="301"/>
    </location>
    <ligand>
        <name>Mg(2+)</name>
        <dbReference type="ChEBI" id="CHEBI:18420"/>
        <label>1</label>
    </ligand>
</feature>
<feature type="binding site" evidence="2">
    <location>
        <position position="301"/>
    </location>
    <ligand>
        <name>Mg(2+)</name>
        <dbReference type="ChEBI" id="CHEBI:18420"/>
        <label>2</label>
    </ligand>
</feature>
<feature type="binding site" evidence="2">
    <location>
        <position position="303"/>
    </location>
    <ligand>
        <name>Mg(2+)</name>
        <dbReference type="ChEBI" id="CHEBI:18420"/>
        <label>2</label>
    </ligand>
</feature>
<dbReference type="EC" id="6.3.2.4" evidence="2"/>
<dbReference type="EMBL" id="FM204884">
    <property type="protein sequence ID" value="CAW99921.1"/>
    <property type="molecule type" value="Genomic_DNA"/>
</dbReference>
<dbReference type="SMR" id="C0MCV8"/>
<dbReference type="KEGG" id="seq:SZO_13560"/>
<dbReference type="eggNOG" id="COG1181">
    <property type="taxonomic scope" value="Bacteria"/>
</dbReference>
<dbReference type="HOGENOM" id="CLU_039268_0_0_9"/>
<dbReference type="UniPathway" id="UPA00219"/>
<dbReference type="Proteomes" id="UP000001368">
    <property type="component" value="Chromosome"/>
</dbReference>
<dbReference type="GO" id="GO:0005829">
    <property type="term" value="C:cytosol"/>
    <property type="evidence" value="ECO:0007669"/>
    <property type="project" value="TreeGrafter"/>
</dbReference>
<dbReference type="GO" id="GO:0005524">
    <property type="term" value="F:ATP binding"/>
    <property type="evidence" value="ECO:0007669"/>
    <property type="project" value="UniProtKB-KW"/>
</dbReference>
<dbReference type="GO" id="GO:0008716">
    <property type="term" value="F:D-alanine-D-alanine ligase activity"/>
    <property type="evidence" value="ECO:0007669"/>
    <property type="project" value="UniProtKB-UniRule"/>
</dbReference>
<dbReference type="GO" id="GO:0046872">
    <property type="term" value="F:metal ion binding"/>
    <property type="evidence" value="ECO:0007669"/>
    <property type="project" value="UniProtKB-KW"/>
</dbReference>
<dbReference type="GO" id="GO:0071555">
    <property type="term" value="P:cell wall organization"/>
    <property type="evidence" value="ECO:0007669"/>
    <property type="project" value="UniProtKB-KW"/>
</dbReference>
<dbReference type="GO" id="GO:0009252">
    <property type="term" value="P:peptidoglycan biosynthetic process"/>
    <property type="evidence" value="ECO:0007669"/>
    <property type="project" value="UniProtKB-UniRule"/>
</dbReference>
<dbReference type="GO" id="GO:0008360">
    <property type="term" value="P:regulation of cell shape"/>
    <property type="evidence" value="ECO:0007669"/>
    <property type="project" value="UniProtKB-KW"/>
</dbReference>
<dbReference type="FunFam" id="3.30.1490.20:FF:000007">
    <property type="entry name" value="D-alanine--D-alanine ligase"/>
    <property type="match status" value="1"/>
</dbReference>
<dbReference type="FunFam" id="3.30.470.20:FF:000008">
    <property type="entry name" value="D-alanine--D-alanine ligase"/>
    <property type="match status" value="1"/>
</dbReference>
<dbReference type="Gene3D" id="3.40.50.20">
    <property type="match status" value="1"/>
</dbReference>
<dbReference type="Gene3D" id="3.30.1490.20">
    <property type="entry name" value="ATP-grasp fold, A domain"/>
    <property type="match status" value="1"/>
</dbReference>
<dbReference type="Gene3D" id="3.30.470.20">
    <property type="entry name" value="ATP-grasp fold, B domain"/>
    <property type="match status" value="1"/>
</dbReference>
<dbReference type="HAMAP" id="MF_00047">
    <property type="entry name" value="Dala_Dala_lig"/>
    <property type="match status" value="1"/>
</dbReference>
<dbReference type="InterPro" id="IPR011761">
    <property type="entry name" value="ATP-grasp"/>
</dbReference>
<dbReference type="InterPro" id="IPR013815">
    <property type="entry name" value="ATP_grasp_subdomain_1"/>
</dbReference>
<dbReference type="InterPro" id="IPR000291">
    <property type="entry name" value="D-Ala_lig_Van_CS"/>
</dbReference>
<dbReference type="InterPro" id="IPR005905">
    <property type="entry name" value="D_ala_D_ala"/>
</dbReference>
<dbReference type="InterPro" id="IPR011095">
    <property type="entry name" value="Dala_Dala_lig_C"/>
</dbReference>
<dbReference type="InterPro" id="IPR011127">
    <property type="entry name" value="Dala_Dala_lig_N"/>
</dbReference>
<dbReference type="InterPro" id="IPR016185">
    <property type="entry name" value="PreATP-grasp_dom_sf"/>
</dbReference>
<dbReference type="NCBIfam" id="TIGR01205">
    <property type="entry name" value="D_ala_D_alaTIGR"/>
    <property type="match status" value="1"/>
</dbReference>
<dbReference type="NCBIfam" id="NF002528">
    <property type="entry name" value="PRK01966.1-4"/>
    <property type="match status" value="1"/>
</dbReference>
<dbReference type="NCBIfam" id="NF002529">
    <property type="entry name" value="PRK01966.1-5"/>
    <property type="match status" value="1"/>
</dbReference>
<dbReference type="PANTHER" id="PTHR23132">
    <property type="entry name" value="D-ALANINE--D-ALANINE LIGASE"/>
    <property type="match status" value="1"/>
</dbReference>
<dbReference type="PANTHER" id="PTHR23132:SF25">
    <property type="entry name" value="D-ALANINE--D-ALANINE LIGASE A"/>
    <property type="match status" value="1"/>
</dbReference>
<dbReference type="Pfam" id="PF07478">
    <property type="entry name" value="Dala_Dala_lig_C"/>
    <property type="match status" value="1"/>
</dbReference>
<dbReference type="Pfam" id="PF01820">
    <property type="entry name" value="Dala_Dala_lig_N"/>
    <property type="match status" value="1"/>
</dbReference>
<dbReference type="PIRSF" id="PIRSF039102">
    <property type="entry name" value="Ddl/VanB"/>
    <property type="match status" value="1"/>
</dbReference>
<dbReference type="SUPFAM" id="SSF56059">
    <property type="entry name" value="Glutathione synthetase ATP-binding domain-like"/>
    <property type="match status" value="1"/>
</dbReference>
<dbReference type="SUPFAM" id="SSF52440">
    <property type="entry name" value="PreATP-grasp domain"/>
    <property type="match status" value="1"/>
</dbReference>
<dbReference type="PROSITE" id="PS50975">
    <property type="entry name" value="ATP_GRASP"/>
    <property type="match status" value="1"/>
</dbReference>
<dbReference type="PROSITE" id="PS00843">
    <property type="entry name" value="DALA_DALA_LIGASE_1"/>
    <property type="match status" value="1"/>
</dbReference>
<dbReference type="PROSITE" id="PS00844">
    <property type="entry name" value="DALA_DALA_LIGASE_2"/>
    <property type="match status" value="1"/>
</dbReference>
<sequence>MSKQTLILLYGGRSAEREVSVLSAESVMRAVDYTKFFVKTYFISQTGQFIKTQEFSSRPTLTERLMTNDTIRLEQQIRPSDIYEEGAVVFPVLHGPMGEDGSIQGFLEVLRMPYVGTNILSSSVAMDKITTKRVLESAGIPQVAYTVYIEGQDLDRCLAETEAALSYPVFVKPANMGSSVGISKAESEEELRAAILLALTYDSRILIEQGVLAREIEVGLLGNTDVKSTLPGEVVKNVDFYDYQAKYIDNEITMAIPATIDESAMTSMRIYAETAFKAIGACGLSRCDFFLGQDGQIYLNELNTMPGFTQWSMYPLLWEHMGLNYAELIEELVRLAQEMFEKREGHLI</sequence>
<keyword id="KW-0067">ATP-binding</keyword>
<keyword id="KW-0133">Cell shape</keyword>
<keyword id="KW-0961">Cell wall biogenesis/degradation</keyword>
<keyword id="KW-0963">Cytoplasm</keyword>
<keyword id="KW-0436">Ligase</keyword>
<keyword id="KW-0460">Magnesium</keyword>
<keyword id="KW-0464">Manganese</keyword>
<keyword id="KW-0479">Metal-binding</keyword>
<keyword id="KW-0547">Nucleotide-binding</keyword>
<keyword id="KW-0573">Peptidoglycan synthesis</keyword>
<comment type="function">
    <text evidence="2">Cell wall formation.</text>
</comment>
<comment type="catalytic activity">
    <reaction evidence="2">
        <text>2 D-alanine + ATP = D-alanyl-D-alanine + ADP + phosphate + H(+)</text>
        <dbReference type="Rhea" id="RHEA:11224"/>
        <dbReference type="ChEBI" id="CHEBI:15378"/>
        <dbReference type="ChEBI" id="CHEBI:30616"/>
        <dbReference type="ChEBI" id="CHEBI:43474"/>
        <dbReference type="ChEBI" id="CHEBI:57416"/>
        <dbReference type="ChEBI" id="CHEBI:57822"/>
        <dbReference type="ChEBI" id="CHEBI:456216"/>
        <dbReference type="EC" id="6.3.2.4"/>
    </reaction>
</comment>
<comment type="cofactor">
    <cofactor evidence="1">
        <name>Mg(2+)</name>
        <dbReference type="ChEBI" id="CHEBI:18420"/>
    </cofactor>
    <cofactor evidence="1">
        <name>Mn(2+)</name>
        <dbReference type="ChEBI" id="CHEBI:29035"/>
    </cofactor>
    <text evidence="1">Binds 2 magnesium or manganese ions per subunit.</text>
</comment>
<comment type="pathway">
    <text evidence="2">Cell wall biogenesis; peptidoglycan biosynthesis.</text>
</comment>
<comment type="subcellular location">
    <subcellularLocation>
        <location evidence="2">Cytoplasm</location>
    </subcellularLocation>
</comment>
<comment type="similarity">
    <text evidence="2">Belongs to the D-alanine--D-alanine ligase family.</text>
</comment>
<accession>C0MCV8</accession>
<organism>
    <name type="scientific">Streptococcus equi subsp. zooepidemicus (strain H70)</name>
    <dbReference type="NCBI Taxonomy" id="553483"/>
    <lineage>
        <taxon>Bacteria</taxon>
        <taxon>Bacillati</taxon>
        <taxon>Bacillota</taxon>
        <taxon>Bacilli</taxon>
        <taxon>Lactobacillales</taxon>
        <taxon>Streptococcaceae</taxon>
        <taxon>Streptococcus</taxon>
    </lineage>
</organism>
<proteinExistence type="inferred from homology"/>
<protein>
    <recommendedName>
        <fullName evidence="2">D-alanine--D-alanine ligase</fullName>
        <ecNumber evidence="2">6.3.2.4</ecNumber>
    </recommendedName>
    <alternativeName>
        <fullName evidence="2">D-Ala-D-Ala ligase</fullName>
    </alternativeName>
    <alternativeName>
        <fullName evidence="2">D-alanylalanine synthetase</fullName>
    </alternativeName>
</protein>